<feature type="chain" id="PRO_1000017023" description="Ribose-5-phosphate isomerase A">
    <location>
        <begin position="1"/>
        <end position="220"/>
    </location>
</feature>
<feature type="active site" description="Proton acceptor" evidence="1">
    <location>
        <position position="103"/>
    </location>
</feature>
<feature type="binding site" evidence="1">
    <location>
        <begin position="28"/>
        <end position="31"/>
    </location>
    <ligand>
        <name>substrate</name>
    </ligand>
</feature>
<feature type="binding site" evidence="1">
    <location>
        <begin position="81"/>
        <end position="84"/>
    </location>
    <ligand>
        <name>substrate</name>
    </ligand>
</feature>
<feature type="binding site" evidence="1">
    <location>
        <begin position="94"/>
        <end position="97"/>
    </location>
    <ligand>
        <name>substrate</name>
    </ligand>
</feature>
<feature type="binding site" evidence="1">
    <location>
        <position position="121"/>
    </location>
    <ligand>
        <name>substrate</name>
    </ligand>
</feature>
<sequence>MTQDELKQQVAIAAIEYVVPDTFIGVGTGSTANFFIDELAKIKGKIKGAVASSEATAERLKDHGIPVMELNSVDELSVYIDGADEADPKLNLIKGGGGALTREKIVLAVAKQFVCIADDSKKVAVLGKFPLPIEVIPMARSYVAREVVKRFGGEPVLREGFTTDNGNVILDIHGLEITDPVAMETELNGIVGVVTNGLFAARNADIFLCGTANGVETIKA</sequence>
<keyword id="KW-0413">Isomerase</keyword>
<comment type="function">
    <text evidence="1">Catalyzes the reversible conversion of ribose-5-phosphate to ribulose 5-phosphate.</text>
</comment>
<comment type="catalytic activity">
    <reaction evidence="1">
        <text>aldehydo-D-ribose 5-phosphate = D-ribulose 5-phosphate</text>
        <dbReference type="Rhea" id="RHEA:14657"/>
        <dbReference type="ChEBI" id="CHEBI:58121"/>
        <dbReference type="ChEBI" id="CHEBI:58273"/>
        <dbReference type="EC" id="5.3.1.6"/>
    </reaction>
</comment>
<comment type="pathway">
    <text evidence="1">Carbohydrate degradation; pentose phosphate pathway; D-ribose 5-phosphate from D-ribulose 5-phosphate (non-oxidative stage): step 1/1.</text>
</comment>
<comment type="subunit">
    <text evidence="1">Homodimer.</text>
</comment>
<comment type="similarity">
    <text evidence="1">Belongs to the ribose 5-phosphate isomerase family.</text>
</comment>
<name>RPIA_HYDCU</name>
<accession>Q31FB3</accession>
<proteinExistence type="inferred from homology"/>
<organism>
    <name type="scientific">Hydrogenovibrio crunogenus (strain DSM 25203 / XCL-2)</name>
    <name type="common">Thiomicrospira crunogena</name>
    <dbReference type="NCBI Taxonomy" id="317025"/>
    <lineage>
        <taxon>Bacteria</taxon>
        <taxon>Pseudomonadati</taxon>
        <taxon>Pseudomonadota</taxon>
        <taxon>Gammaproteobacteria</taxon>
        <taxon>Thiotrichales</taxon>
        <taxon>Piscirickettsiaceae</taxon>
        <taxon>Hydrogenovibrio</taxon>
    </lineage>
</organism>
<reference key="1">
    <citation type="journal article" date="2006" name="PLoS Biol.">
        <title>The genome of deep-sea vent chemolithoautotroph Thiomicrospira crunogena XCL-2.</title>
        <authorList>
            <person name="Scott K.M."/>
            <person name="Sievert S.M."/>
            <person name="Abril F.N."/>
            <person name="Ball L.A."/>
            <person name="Barrett C.J."/>
            <person name="Blake R.A."/>
            <person name="Boller A.J."/>
            <person name="Chain P.S.G."/>
            <person name="Clark J.A."/>
            <person name="Davis C.R."/>
            <person name="Detter C."/>
            <person name="Do K.F."/>
            <person name="Dobrinski K.P."/>
            <person name="Faza B.I."/>
            <person name="Fitzpatrick K.A."/>
            <person name="Freyermuth S.K."/>
            <person name="Harmer T.L."/>
            <person name="Hauser L.J."/>
            <person name="Huegler M."/>
            <person name="Kerfeld C.A."/>
            <person name="Klotz M.G."/>
            <person name="Kong W.W."/>
            <person name="Land M."/>
            <person name="Lapidus A."/>
            <person name="Larimer F.W."/>
            <person name="Longo D.L."/>
            <person name="Lucas S."/>
            <person name="Malfatti S.A."/>
            <person name="Massey S.E."/>
            <person name="Martin D.D."/>
            <person name="McCuddin Z."/>
            <person name="Meyer F."/>
            <person name="Moore J.L."/>
            <person name="Ocampo L.H. Jr."/>
            <person name="Paul J.H."/>
            <person name="Paulsen I.T."/>
            <person name="Reep D.K."/>
            <person name="Ren Q."/>
            <person name="Ross R.L."/>
            <person name="Sato P.Y."/>
            <person name="Thomas P."/>
            <person name="Tinkham L.E."/>
            <person name="Zeruth G.T."/>
        </authorList>
    </citation>
    <scope>NUCLEOTIDE SEQUENCE [LARGE SCALE GENOMIC DNA]</scope>
    <source>
        <strain>DSM 25203 / XCL-2</strain>
    </source>
</reference>
<gene>
    <name evidence="1" type="primary">rpiA</name>
    <name type="ordered locus">Tcr_1568</name>
</gene>
<dbReference type="EC" id="5.3.1.6" evidence="1"/>
<dbReference type="EMBL" id="CP000109">
    <property type="protein sequence ID" value="ABB42160.1"/>
    <property type="molecule type" value="Genomic_DNA"/>
</dbReference>
<dbReference type="SMR" id="Q31FB3"/>
<dbReference type="STRING" id="317025.Tcr_1568"/>
<dbReference type="KEGG" id="tcx:Tcr_1568"/>
<dbReference type="eggNOG" id="COG0120">
    <property type="taxonomic scope" value="Bacteria"/>
</dbReference>
<dbReference type="HOGENOM" id="CLU_056590_1_1_6"/>
<dbReference type="OrthoDB" id="5870696at2"/>
<dbReference type="UniPathway" id="UPA00115">
    <property type="reaction ID" value="UER00412"/>
</dbReference>
<dbReference type="GO" id="GO:0005829">
    <property type="term" value="C:cytosol"/>
    <property type="evidence" value="ECO:0007669"/>
    <property type="project" value="TreeGrafter"/>
</dbReference>
<dbReference type="GO" id="GO:0004751">
    <property type="term" value="F:ribose-5-phosphate isomerase activity"/>
    <property type="evidence" value="ECO:0007669"/>
    <property type="project" value="UniProtKB-UniRule"/>
</dbReference>
<dbReference type="GO" id="GO:0006014">
    <property type="term" value="P:D-ribose metabolic process"/>
    <property type="evidence" value="ECO:0007669"/>
    <property type="project" value="TreeGrafter"/>
</dbReference>
<dbReference type="GO" id="GO:0009052">
    <property type="term" value="P:pentose-phosphate shunt, non-oxidative branch"/>
    <property type="evidence" value="ECO:0007669"/>
    <property type="project" value="UniProtKB-UniRule"/>
</dbReference>
<dbReference type="CDD" id="cd01398">
    <property type="entry name" value="RPI_A"/>
    <property type="match status" value="1"/>
</dbReference>
<dbReference type="FunFam" id="3.30.70.260:FF:000004">
    <property type="entry name" value="Ribose-5-phosphate isomerase A"/>
    <property type="match status" value="1"/>
</dbReference>
<dbReference type="FunFam" id="3.40.50.1360:FF:000001">
    <property type="entry name" value="Ribose-5-phosphate isomerase A"/>
    <property type="match status" value="1"/>
</dbReference>
<dbReference type="Gene3D" id="3.30.70.260">
    <property type="match status" value="1"/>
</dbReference>
<dbReference type="Gene3D" id="3.40.50.1360">
    <property type="match status" value="1"/>
</dbReference>
<dbReference type="HAMAP" id="MF_00170">
    <property type="entry name" value="Rib_5P_isom_A"/>
    <property type="match status" value="1"/>
</dbReference>
<dbReference type="InterPro" id="IPR037171">
    <property type="entry name" value="NagB/RpiA_transferase-like"/>
</dbReference>
<dbReference type="InterPro" id="IPR020672">
    <property type="entry name" value="Ribose5P_isomerase_typA_subgr"/>
</dbReference>
<dbReference type="InterPro" id="IPR004788">
    <property type="entry name" value="Ribose5P_isomerase_type_A"/>
</dbReference>
<dbReference type="NCBIfam" id="NF001924">
    <property type="entry name" value="PRK00702.1"/>
    <property type="match status" value="1"/>
</dbReference>
<dbReference type="NCBIfam" id="TIGR00021">
    <property type="entry name" value="rpiA"/>
    <property type="match status" value="1"/>
</dbReference>
<dbReference type="PANTHER" id="PTHR11934">
    <property type="entry name" value="RIBOSE-5-PHOSPHATE ISOMERASE"/>
    <property type="match status" value="1"/>
</dbReference>
<dbReference type="PANTHER" id="PTHR11934:SF0">
    <property type="entry name" value="RIBOSE-5-PHOSPHATE ISOMERASE"/>
    <property type="match status" value="1"/>
</dbReference>
<dbReference type="Pfam" id="PF06026">
    <property type="entry name" value="Rib_5-P_isom_A"/>
    <property type="match status" value="1"/>
</dbReference>
<dbReference type="SUPFAM" id="SSF75445">
    <property type="entry name" value="D-ribose-5-phosphate isomerase (RpiA), lid domain"/>
    <property type="match status" value="1"/>
</dbReference>
<dbReference type="SUPFAM" id="SSF100950">
    <property type="entry name" value="NagB/RpiA/CoA transferase-like"/>
    <property type="match status" value="1"/>
</dbReference>
<evidence type="ECO:0000255" key="1">
    <source>
        <dbReference type="HAMAP-Rule" id="MF_00170"/>
    </source>
</evidence>
<protein>
    <recommendedName>
        <fullName evidence="1">Ribose-5-phosphate isomerase A</fullName>
        <ecNumber evidence="1">5.3.1.6</ecNumber>
    </recommendedName>
    <alternativeName>
        <fullName evidence="1">Phosphoriboisomerase A</fullName>
        <shortName evidence="1">PRI</shortName>
    </alternativeName>
</protein>